<proteinExistence type="evidence at protein level"/>
<protein>
    <recommendedName>
        <fullName evidence="4 5">Phenylalanine dehydrogenase</fullName>
        <shortName>PheDH</shortName>
        <ecNumber evidence="2 3">1.4.1.20</ecNumber>
    </recommendedName>
</protein>
<reference evidence="10" key="1">
    <citation type="journal article" date="1994" name="J. Biol. Chem.">
        <title>Cloning, sequencing, and expression of Rhodococcus L-phenylalanine dehydrogenase. Sequence comparisons to amino-acid dehydrogenases.</title>
        <authorList>
            <person name="Brunhuber N.M."/>
            <person name="Banerjee A."/>
            <person name="Jacobs W.R. Jr."/>
            <person name="Blanchard J.S."/>
        </authorList>
    </citation>
    <scope>NUCLEOTIDE SEQUENCE [GENOMIC DNA]</scope>
    <scope>PROTEIN SEQUENCE OF 1-38; 90-95; 97-114 AND 300-312</scope>
    <scope>FUNCTION</scope>
    <scope>CATALYTIC ACTIVITY</scope>
    <source>
        <strain evidence="10">M4</strain>
    </source>
</reference>
<reference evidence="11 12" key="2">
    <citation type="journal article" date="1999" name="Biochemistry">
        <title>Phenylalanine dehydrogenase from Rhodococcus sp. M4: high-resolution X-ray analyses of inhibitory ternary complexes reveal key features in the oxidative deamination mechanism.</title>
        <authorList>
            <person name="Vanhooke J.L."/>
            <person name="Thoden J.B."/>
            <person name="Brunhuber N.M."/>
            <person name="Blanchard J.S."/>
            <person name="Holden H.M."/>
        </authorList>
    </citation>
    <scope>X-RAY CRYSTALLOGRAPHY (1.50 ANGSTROMS) IN COMPLEXES WITH NAD; PHENYLPROPIONATE AND KETO-PHENYLPYRUVATE</scope>
    <scope>SUBUNIT</scope>
</reference>
<reference evidence="13 14" key="3">
    <citation type="journal article" date="2000" name="Biochemistry">
        <title>Rhodococcus L-phenylalanine dehydrogenase: kinetics, mechanism, and structural basis for catalytic specificity.</title>
        <authorList>
            <person name="Brunhuber N.M."/>
            <person name="Thoden J.B."/>
            <person name="Blanchard J.S."/>
            <person name="Vanhooke J.L."/>
        </authorList>
    </citation>
    <scope>X-RAY CRYSTALLOGRAPHY (1.25 ANGSTROMS) OF 2-356 IN COMPLEX WITH NAD AND SUBSTRATE</scope>
    <scope>FUNCTION</scope>
    <scope>PATHWAY</scope>
    <scope>CATALYTIC ACTIVITY</scope>
    <scope>ACTIVITY REGULATION</scope>
    <scope>SUBUNIT</scope>
    <scope>BIOPHYSICOCHEMICAL PROPERTIES</scope>
    <scope>ACTIVE SITE</scope>
</reference>
<accession>Q59771</accession>
<gene>
    <name evidence="6 10" type="primary">pdh</name>
</gene>
<evidence type="ECO:0000255" key="1">
    <source>
        <dbReference type="RuleBase" id="RU004417"/>
    </source>
</evidence>
<evidence type="ECO:0000269" key="2">
    <source>
    </source>
</evidence>
<evidence type="ECO:0000269" key="3">
    <source>
    </source>
</evidence>
<evidence type="ECO:0000303" key="4">
    <source>
    </source>
</evidence>
<evidence type="ECO:0000303" key="5">
    <source>
    </source>
</evidence>
<evidence type="ECO:0000303" key="6">
    <source>
    </source>
</evidence>
<evidence type="ECO:0000305" key="7"/>
<evidence type="ECO:0000305" key="8">
    <source>
    </source>
</evidence>
<evidence type="ECO:0000305" key="9">
    <source>
    </source>
</evidence>
<evidence type="ECO:0000312" key="10">
    <source>
        <dbReference type="EMBL" id="AAA21461.1"/>
    </source>
</evidence>
<evidence type="ECO:0007744" key="11">
    <source>
        <dbReference type="PDB" id="1BW9"/>
    </source>
</evidence>
<evidence type="ECO:0007744" key="12">
    <source>
        <dbReference type="PDB" id="1BXG"/>
    </source>
</evidence>
<evidence type="ECO:0007744" key="13">
    <source>
        <dbReference type="PDB" id="1C1D"/>
    </source>
</evidence>
<evidence type="ECO:0007744" key="14">
    <source>
        <dbReference type="PDB" id="1C1X"/>
    </source>
</evidence>
<evidence type="ECO:0007829" key="15">
    <source>
        <dbReference type="PDB" id="1C1D"/>
    </source>
</evidence>
<evidence type="ECO:0007829" key="16">
    <source>
        <dbReference type="PDB" id="1C1X"/>
    </source>
</evidence>
<name>DHPH_RHOSO</name>
<sequence>MSIDSALNWDGEMTVTRFDRETGAHFVIRLDSTQLGPAAGGTRAAQYSQLADALTDAGKLAGAMTLKMAVSNLPMGGGKSVIALPAPRHSIDPSTWARILRIHAENIDKLSGNYWTGPDVNTNSADMDTLNDTTEFVFGRSLERGGAGSSAFTTAVGVFEAMKATVAHRGLGSLDGLTVLVQGLGAVGGSLASLAAEAGAQLLVADTDTERVAHAVALGHTAVALEDVLSTPCDVFAPCAMGGVITTEVARTLDCSVVAGAANNVIADEAASDILHARGILYAPDFVANAGGAIHLVGREVLGWSESVVHERAVAIGDTLNQVFEISDNDGVTPDEAARTLAGRRAREASTTTATA</sequence>
<feature type="initiator methionine" description="Removed" evidence="3">
    <location>
        <position position="1"/>
    </location>
</feature>
<feature type="chain" id="PRO_0000434608" description="Phenylalanine dehydrogenase">
    <location>
        <begin position="2"/>
        <end position="356"/>
    </location>
</feature>
<feature type="active site" description="Proton donor/acceptor" evidence="9">
    <location>
        <position position="79"/>
    </location>
</feature>
<feature type="binding site" evidence="2 13">
    <location>
        <position position="43"/>
    </location>
    <ligand>
        <name>NAD(+)</name>
        <dbReference type="ChEBI" id="CHEBI:57540"/>
    </ligand>
</feature>
<feature type="binding site" evidence="2 13">
    <location>
        <position position="67"/>
    </location>
    <ligand>
        <name>L-phenylalanine</name>
        <dbReference type="ChEBI" id="CHEBI:58095"/>
    </ligand>
</feature>
<feature type="binding site" evidence="2 13">
    <location>
        <begin position="118"/>
        <end position="119"/>
    </location>
    <ligand>
        <name>L-phenylalanine</name>
        <dbReference type="ChEBI" id="CHEBI:58095"/>
    </ligand>
</feature>
<feature type="binding site" evidence="2 12 13 14">
    <location>
        <position position="119"/>
    </location>
    <ligand>
        <name>NAD(+)</name>
        <dbReference type="ChEBI" id="CHEBI:57540"/>
    </ligand>
</feature>
<feature type="binding site" evidence="2 12 13 14">
    <location>
        <position position="150"/>
    </location>
    <ligand>
        <name>NAD(+)</name>
        <dbReference type="ChEBI" id="CHEBI:57540"/>
    </ligand>
</feature>
<feature type="binding site" evidence="2 12 13 14">
    <location>
        <position position="154"/>
    </location>
    <ligand>
        <name>NAD(+)</name>
        <dbReference type="ChEBI" id="CHEBI:57540"/>
    </ligand>
</feature>
<feature type="binding site" evidence="2 7 11 12 13">
    <location>
        <begin position="183"/>
        <end position="189"/>
    </location>
    <ligand>
        <name>NAD(+)</name>
        <dbReference type="ChEBI" id="CHEBI:57540"/>
    </ligand>
</feature>
<feature type="binding site" evidence="2 11 12 13">
    <location>
        <begin position="206"/>
        <end position="207"/>
    </location>
    <ligand>
        <name>NAD(+)</name>
        <dbReference type="ChEBI" id="CHEBI:57540"/>
    </ligand>
</feature>
<feature type="binding site" evidence="2 11 12 13">
    <location>
        <position position="211"/>
    </location>
    <ligand>
        <name>NAD(+)</name>
        <dbReference type="ChEBI" id="CHEBI:57540"/>
    </ligand>
</feature>
<feature type="binding site" evidence="2 11 12 13">
    <location>
        <begin position="240"/>
        <end position="241"/>
    </location>
    <ligand>
        <name>NAD(+)</name>
        <dbReference type="ChEBI" id="CHEBI:57540"/>
    </ligand>
</feature>
<feature type="binding site" evidence="2 11 12 13">
    <location>
        <begin position="261"/>
        <end position="263"/>
    </location>
    <ligand>
        <name>NAD(+)</name>
        <dbReference type="ChEBI" id="CHEBI:57540"/>
    </ligand>
</feature>
<feature type="binding site" evidence="2 13">
    <location>
        <position position="263"/>
    </location>
    <ligand>
        <name>L-phenylalanine</name>
        <dbReference type="ChEBI" id="CHEBI:58095"/>
    </ligand>
</feature>
<feature type="helix" evidence="15">
    <location>
        <begin position="3"/>
        <end position="7"/>
    </location>
</feature>
<feature type="strand" evidence="15">
    <location>
        <begin position="11"/>
        <end position="19"/>
    </location>
</feature>
<feature type="turn" evidence="15">
    <location>
        <begin position="20"/>
        <end position="23"/>
    </location>
</feature>
<feature type="strand" evidence="15">
    <location>
        <begin position="24"/>
        <end position="32"/>
    </location>
</feature>
<feature type="strand" evidence="15">
    <location>
        <begin position="34"/>
        <end position="45"/>
    </location>
</feature>
<feature type="helix" evidence="15">
    <location>
        <begin position="50"/>
        <end position="70"/>
    </location>
</feature>
<feature type="strand" evidence="15">
    <location>
        <begin position="76"/>
        <end position="83"/>
    </location>
</feature>
<feature type="helix" evidence="15">
    <location>
        <begin position="88"/>
        <end position="90"/>
    </location>
</feature>
<feature type="helix" evidence="15">
    <location>
        <begin position="93"/>
        <end position="109"/>
    </location>
</feature>
<feature type="turn" evidence="15">
    <location>
        <begin position="110"/>
        <end position="112"/>
    </location>
</feature>
<feature type="strand" evidence="15">
    <location>
        <begin position="113"/>
        <end position="118"/>
    </location>
</feature>
<feature type="helix" evidence="15">
    <location>
        <begin position="124"/>
        <end position="133"/>
    </location>
</feature>
<feature type="helix" evidence="15">
    <location>
        <begin position="142"/>
        <end position="144"/>
    </location>
</feature>
<feature type="helix" evidence="15">
    <location>
        <begin position="151"/>
        <end position="168"/>
    </location>
</feature>
<feature type="strand" evidence="15">
    <location>
        <begin position="178"/>
        <end position="182"/>
    </location>
</feature>
<feature type="helix" evidence="15">
    <location>
        <begin position="186"/>
        <end position="197"/>
    </location>
</feature>
<feature type="strand" evidence="15">
    <location>
        <begin position="201"/>
        <end position="205"/>
    </location>
</feature>
<feature type="helix" evidence="15">
    <location>
        <begin position="209"/>
        <end position="217"/>
    </location>
</feature>
<feature type="helix" evidence="15">
    <location>
        <begin position="225"/>
        <end position="230"/>
    </location>
</feature>
<feature type="strand" evidence="15">
    <location>
        <begin position="234"/>
        <end position="238"/>
    </location>
</feature>
<feature type="helix" evidence="15">
    <location>
        <begin position="247"/>
        <end position="252"/>
    </location>
</feature>
<feature type="strand" evidence="15">
    <location>
        <begin position="256"/>
        <end position="258"/>
    </location>
</feature>
<feature type="strand" evidence="16">
    <location>
        <begin position="266"/>
        <end position="268"/>
    </location>
</feature>
<feature type="helix" evidence="15">
    <location>
        <begin position="269"/>
        <end position="277"/>
    </location>
</feature>
<feature type="helix" evidence="15">
    <location>
        <begin position="285"/>
        <end position="288"/>
    </location>
</feature>
<feature type="helix" evidence="15">
    <location>
        <begin position="291"/>
        <end position="300"/>
    </location>
</feature>
<feature type="helix" evidence="15">
    <location>
        <begin position="306"/>
        <end position="314"/>
    </location>
</feature>
<feature type="helix" evidence="15">
    <location>
        <begin position="316"/>
        <end position="330"/>
    </location>
</feature>
<feature type="helix" evidence="15">
    <location>
        <begin position="334"/>
        <end position="348"/>
    </location>
</feature>
<comment type="function">
    <text evidence="2 3">Catalyzes the reversible NAD(+)-dependent oxidative deamination of L-phenylalanine to phenylpyruvate.</text>
</comment>
<comment type="catalytic activity">
    <reaction evidence="2 3">
        <text>L-phenylalanine + NAD(+) + H2O = 3-phenylpyruvate + NH4(+) + NADH + H(+)</text>
        <dbReference type="Rhea" id="RHEA:21408"/>
        <dbReference type="ChEBI" id="CHEBI:15377"/>
        <dbReference type="ChEBI" id="CHEBI:15378"/>
        <dbReference type="ChEBI" id="CHEBI:18005"/>
        <dbReference type="ChEBI" id="CHEBI:28938"/>
        <dbReference type="ChEBI" id="CHEBI:57540"/>
        <dbReference type="ChEBI" id="CHEBI:57945"/>
        <dbReference type="ChEBI" id="CHEBI:58095"/>
        <dbReference type="EC" id="1.4.1.20"/>
    </reaction>
</comment>
<comment type="activity regulation">
    <text evidence="2">Subject to competitive inhibition by 3-phenylpropionate for the conversion of L-phenylalanine to phenylpyruvate. Subject to competitive inhibition by D-phenylalanine for the conversion of phenylpyruvate to L-phenylalanine.</text>
</comment>
<comment type="biophysicochemical properties">
    <kinetics>
        <KM>1.4 mM for NAD in the forward reaction</KM>
        <KM>0.03 mM for NADH in the reverse reaction</KM>
        <KM>0.12 mM for phenylpyruvate in the reverse reaction</KM>
        <KM>5.5 mM for L-phenylalanine in the forward reaction</KM>
    </kinetics>
</comment>
<comment type="pathway">
    <text evidence="9">Amino-acid biosynthesis; L-phenylalanine biosynthesis; L-phenylalanine from phenylpyruvate (PDH route): step 1/1.</text>
</comment>
<comment type="subunit">
    <text evidence="2 8">Homotetramer, dimer of dimers.</text>
</comment>
<comment type="similarity">
    <text evidence="1">Belongs to the Glu/Leu/Phe/Val dehydrogenases family.</text>
</comment>
<dbReference type="EC" id="1.4.1.20" evidence="2 3"/>
<dbReference type="EMBL" id="U08381">
    <property type="protein sequence ID" value="AAA21461.1"/>
    <property type="molecule type" value="Genomic_DNA"/>
</dbReference>
<dbReference type="PIR" id="A54038">
    <property type="entry name" value="A54038"/>
</dbReference>
<dbReference type="PDB" id="1BW9">
    <property type="method" value="X-ray"/>
    <property type="resolution" value="1.50 A"/>
    <property type="chains" value="A/B=1-356"/>
</dbReference>
<dbReference type="PDB" id="1BXG">
    <property type="method" value="X-ray"/>
    <property type="resolution" value="2.30 A"/>
    <property type="chains" value="A/B=1-356"/>
</dbReference>
<dbReference type="PDB" id="1C1D">
    <property type="method" value="X-ray"/>
    <property type="resolution" value="1.25 A"/>
    <property type="chains" value="A/B=2-356"/>
</dbReference>
<dbReference type="PDB" id="1C1X">
    <property type="method" value="X-ray"/>
    <property type="resolution" value="1.40 A"/>
    <property type="chains" value="A/B=2-356"/>
</dbReference>
<dbReference type="PDBsum" id="1BW9"/>
<dbReference type="PDBsum" id="1BXG"/>
<dbReference type="PDBsum" id="1C1D"/>
<dbReference type="PDBsum" id="1C1X"/>
<dbReference type="SMR" id="Q59771"/>
<dbReference type="DrugBank" id="DB02494">
    <property type="generic name" value="(S)-3-phenyllactic acid"/>
</dbReference>
<dbReference type="DrugBank" id="DB03884">
    <property type="generic name" value="Phenylpyruvic acid"/>
</dbReference>
<dbReference type="BRENDA" id="1.4.1.20">
    <property type="organism ID" value="5397"/>
</dbReference>
<dbReference type="UniPathway" id="UPA00121">
    <property type="reaction ID" value="UER00346"/>
</dbReference>
<dbReference type="EvolutionaryTrace" id="Q59771"/>
<dbReference type="GO" id="GO:0000166">
    <property type="term" value="F:nucleotide binding"/>
    <property type="evidence" value="ECO:0007669"/>
    <property type="project" value="UniProtKB-KW"/>
</dbReference>
<dbReference type="GO" id="GO:0050175">
    <property type="term" value="F:phenylalanine dehydrogenase activity"/>
    <property type="evidence" value="ECO:0000314"/>
    <property type="project" value="UniProtKB"/>
</dbReference>
<dbReference type="GO" id="GO:0009094">
    <property type="term" value="P:L-phenylalanine biosynthetic process"/>
    <property type="evidence" value="ECO:0007669"/>
    <property type="project" value="UniProtKB-UniPathway"/>
</dbReference>
<dbReference type="GO" id="GO:0006559">
    <property type="term" value="P:L-phenylalanine catabolic process"/>
    <property type="evidence" value="ECO:0000314"/>
    <property type="project" value="UniProtKB"/>
</dbReference>
<dbReference type="CDD" id="cd01075">
    <property type="entry name" value="NAD_bind_Leu_Phe_Val_DH"/>
    <property type="match status" value="1"/>
</dbReference>
<dbReference type="FunFam" id="3.40.50.720:FF:001273">
    <property type="entry name" value="Glutamate dehydrogenase"/>
    <property type="match status" value="1"/>
</dbReference>
<dbReference type="Gene3D" id="3.40.50.10860">
    <property type="entry name" value="Leucine Dehydrogenase, chain A, domain 1"/>
    <property type="match status" value="1"/>
</dbReference>
<dbReference type="Gene3D" id="3.40.50.720">
    <property type="entry name" value="NAD(P)-binding Rossmann-like Domain"/>
    <property type="match status" value="1"/>
</dbReference>
<dbReference type="InterPro" id="IPR046346">
    <property type="entry name" value="Aminoacid_DH-like_N_sf"/>
</dbReference>
<dbReference type="InterPro" id="IPR006095">
    <property type="entry name" value="Glu/Leu/Phe/Val/Trp_DH"/>
</dbReference>
<dbReference type="InterPro" id="IPR006096">
    <property type="entry name" value="Glu/Leu/Phe/Val/Trp_DH_C"/>
</dbReference>
<dbReference type="InterPro" id="IPR006097">
    <property type="entry name" value="Glu/Leu/Phe/Val/Trp_DH_dimer"/>
</dbReference>
<dbReference type="InterPro" id="IPR016211">
    <property type="entry name" value="Glu/Phe/Leu/Val/Trp_DH_bac/arc"/>
</dbReference>
<dbReference type="InterPro" id="IPR036291">
    <property type="entry name" value="NAD(P)-bd_dom_sf"/>
</dbReference>
<dbReference type="PANTHER" id="PTHR42722">
    <property type="entry name" value="LEUCINE DEHYDROGENASE"/>
    <property type="match status" value="1"/>
</dbReference>
<dbReference type="PANTHER" id="PTHR42722:SF1">
    <property type="entry name" value="VALINE DEHYDROGENASE"/>
    <property type="match status" value="1"/>
</dbReference>
<dbReference type="Pfam" id="PF00208">
    <property type="entry name" value="ELFV_dehydrog"/>
    <property type="match status" value="1"/>
</dbReference>
<dbReference type="Pfam" id="PF02812">
    <property type="entry name" value="ELFV_dehydrog_N"/>
    <property type="match status" value="1"/>
</dbReference>
<dbReference type="PIRSF" id="PIRSF000188">
    <property type="entry name" value="Phe_leu_dh"/>
    <property type="match status" value="1"/>
</dbReference>
<dbReference type="PRINTS" id="PR00082">
    <property type="entry name" value="GLFDHDRGNASE"/>
</dbReference>
<dbReference type="SMART" id="SM00839">
    <property type="entry name" value="ELFV_dehydrog"/>
    <property type="match status" value="1"/>
</dbReference>
<dbReference type="SUPFAM" id="SSF53223">
    <property type="entry name" value="Aminoacid dehydrogenase-like, N-terminal domain"/>
    <property type="match status" value="1"/>
</dbReference>
<dbReference type="SUPFAM" id="SSF51735">
    <property type="entry name" value="NAD(P)-binding Rossmann-fold domains"/>
    <property type="match status" value="1"/>
</dbReference>
<keyword id="KW-0002">3D-structure</keyword>
<keyword id="KW-0903">Direct protein sequencing</keyword>
<keyword id="KW-0520">NAD</keyword>
<keyword id="KW-0547">Nucleotide-binding</keyword>
<keyword id="KW-0560">Oxidoreductase</keyword>
<organism evidence="10">
    <name type="scientific">Rhodococcus sp</name>
    <dbReference type="NCBI Taxonomy" id="1831"/>
    <lineage>
        <taxon>Bacteria</taxon>
        <taxon>Bacillati</taxon>
        <taxon>Actinomycetota</taxon>
        <taxon>Actinomycetes</taxon>
        <taxon>Mycobacteriales</taxon>
        <taxon>Nocardiaceae</taxon>
        <taxon>Rhodococcus</taxon>
    </lineage>
</organism>